<proteinExistence type="inferred from homology"/>
<accession>B4F1J8</accession>
<reference key="1">
    <citation type="journal article" date="2008" name="J. Bacteriol.">
        <title>Complete genome sequence of uropathogenic Proteus mirabilis, a master of both adherence and motility.</title>
        <authorList>
            <person name="Pearson M.M."/>
            <person name="Sebaihia M."/>
            <person name="Churcher C."/>
            <person name="Quail M.A."/>
            <person name="Seshasayee A.S."/>
            <person name="Luscombe N.M."/>
            <person name="Abdellah Z."/>
            <person name="Arrosmith C."/>
            <person name="Atkin B."/>
            <person name="Chillingworth T."/>
            <person name="Hauser H."/>
            <person name="Jagels K."/>
            <person name="Moule S."/>
            <person name="Mungall K."/>
            <person name="Norbertczak H."/>
            <person name="Rabbinowitsch E."/>
            <person name="Walker D."/>
            <person name="Whithead S."/>
            <person name="Thomson N.R."/>
            <person name="Rather P.N."/>
            <person name="Parkhill J."/>
            <person name="Mobley H.L.T."/>
        </authorList>
    </citation>
    <scope>NUCLEOTIDE SEQUENCE [LARGE SCALE GENOMIC DNA]</scope>
    <source>
        <strain>HI4320</strain>
    </source>
</reference>
<comment type="function">
    <text evidence="1">One of the primary rRNA binding proteins, it binds directly to 16S rRNA central domain where it helps coordinate assembly of the platform of the 30S subunit.</text>
</comment>
<comment type="subunit">
    <text evidence="1">Part of the 30S ribosomal subunit. Contacts proteins S5 and S12.</text>
</comment>
<comment type="similarity">
    <text evidence="1">Belongs to the universal ribosomal protein uS8 family.</text>
</comment>
<protein>
    <recommendedName>
        <fullName evidence="1">Small ribosomal subunit protein uS8</fullName>
    </recommendedName>
    <alternativeName>
        <fullName evidence="2">30S ribosomal protein S8</fullName>
    </alternativeName>
</protein>
<name>RS8_PROMH</name>
<sequence>MSMQDPIADMLTRIRNGQAANKVAVTMPSSKLKVAIANVLKEEGYIEDFKIEGDTKPELEITLKYFQGKAVVESIQRVSRPSLRIYKRKDELPQVMAGLGIAVVSTSKGVMTDRAARQAGLGGEIICYVA</sequence>
<feature type="chain" id="PRO_1000140596" description="Small ribosomal subunit protein uS8">
    <location>
        <begin position="1"/>
        <end position="130"/>
    </location>
</feature>
<dbReference type="EMBL" id="AM942759">
    <property type="protein sequence ID" value="CAR46404.1"/>
    <property type="molecule type" value="Genomic_DNA"/>
</dbReference>
<dbReference type="RefSeq" id="WP_004246950.1">
    <property type="nucleotide sequence ID" value="NC_010554.1"/>
</dbReference>
<dbReference type="SMR" id="B4F1J8"/>
<dbReference type="EnsemblBacteria" id="CAR46404">
    <property type="protein sequence ID" value="CAR46404"/>
    <property type="gene ID" value="PMI3269"/>
</dbReference>
<dbReference type="GeneID" id="93395990"/>
<dbReference type="KEGG" id="pmr:PMI3269"/>
<dbReference type="eggNOG" id="COG0096">
    <property type="taxonomic scope" value="Bacteria"/>
</dbReference>
<dbReference type="HOGENOM" id="CLU_098428_0_0_6"/>
<dbReference type="Proteomes" id="UP000008319">
    <property type="component" value="Chromosome"/>
</dbReference>
<dbReference type="GO" id="GO:1990904">
    <property type="term" value="C:ribonucleoprotein complex"/>
    <property type="evidence" value="ECO:0007669"/>
    <property type="project" value="UniProtKB-KW"/>
</dbReference>
<dbReference type="GO" id="GO:0005840">
    <property type="term" value="C:ribosome"/>
    <property type="evidence" value="ECO:0007669"/>
    <property type="project" value="UniProtKB-KW"/>
</dbReference>
<dbReference type="GO" id="GO:0019843">
    <property type="term" value="F:rRNA binding"/>
    <property type="evidence" value="ECO:0007669"/>
    <property type="project" value="UniProtKB-UniRule"/>
</dbReference>
<dbReference type="GO" id="GO:0003735">
    <property type="term" value="F:structural constituent of ribosome"/>
    <property type="evidence" value="ECO:0007669"/>
    <property type="project" value="InterPro"/>
</dbReference>
<dbReference type="GO" id="GO:0006412">
    <property type="term" value="P:translation"/>
    <property type="evidence" value="ECO:0007669"/>
    <property type="project" value="UniProtKB-UniRule"/>
</dbReference>
<dbReference type="FunFam" id="3.30.1370.30:FF:000003">
    <property type="entry name" value="30S ribosomal protein S8"/>
    <property type="match status" value="1"/>
</dbReference>
<dbReference type="FunFam" id="3.30.1490.10:FF:000001">
    <property type="entry name" value="30S ribosomal protein S8"/>
    <property type="match status" value="1"/>
</dbReference>
<dbReference type="Gene3D" id="3.30.1370.30">
    <property type="match status" value="1"/>
</dbReference>
<dbReference type="Gene3D" id="3.30.1490.10">
    <property type="match status" value="1"/>
</dbReference>
<dbReference type="HAMAP" id="MF_01302_B">
    <property type="entry name" value="Ribosomal_uS8_B"/>
    <property type="match status" value="1"/>
</dbReference>
<dbReference type="InterPro" id="IPR000630">
    <property type="entry name" value="Ribosomal_uS8"/>
</dbReference>
<dbReference type="InterPro" id="IPR047863">
    <property type="entry name" value="Ribosomal_uS8_CS"/>
</dbReference>
<dbReference type="InterPro" id="IPR035987">
    <property type="entry name" value="Ribosomal_uS8_sf"/>
</dbReference>
<dbReference type="NCBIfam" id="NF001109">
    <property type="entry name" value="PRK00136.1"/>
    <property type="match status" value="1"/>
</dbReference>
<dbReference type="PANTHER" id="PTHR11758">
    <property type="entry name" value="40S RIBOSOMAL PROTEIN S15A"/>
    <property type="match status" value="1"/>
</dbReference>
<dbReference type="Pfam" id="PF00410">
    <property type="entry name" value="Ribosomal_S8"/>
    <property type="match status" value="1"/>
</dbReference>
<dbReference type="SUPFAM" id="SSF56047">
    <property type="entry name" value="Ribosomal protein S8"/>
    <property type="match status" value="1"/>
</dbReference>
<dbReference type="PROSITE" id="PS00053">
    <property type="entry name" value="RIBOSOMAL_S8"/>
    <property type="match status" value="1"/>
</dbReference>
<gene>
    <name evidence="1" type="primary">rpsH</name>
    <name type="ordered locus">PMI3269</name>
</gene>
<keyword id="KW-1185">Reference proteome</keyword>
<keyword id="KW-0687">Ribonucleoprotein</keyword>
<keyword id="KW-0689">Ribosomal protein</keyword>
<keyword id="KW-0694">RNA-binding</keyword>
<keyword id="KW-0699">rRNA-binding</keyword>
<evidence type="ECO:0000255" key="1">
    <source>
        <dbReference type="HAMAP-Rule" id="MF_01302"/>
    </source>
</evidence>
<evidence type="ECO:0000305" key="2"/>
<organism>
    <name type="scientific">Proteus mirabilis (strain HI4320)</name>
    <dbReference type="NCBI Taxonomy" id="529507"/>
    <lineage>
        <taxon>Bacteria</taxon>
        <taxon>Pseudomonadati</taxon>
        <taxon>Pseudomonadota</taxon>
        <taxon>Gammaproteobacteria</taxon>
        <taxon>Enterobacterales</taxon>
        <taxon>Morganellaceae</taxon>
        <taxon>Proteus</taxon>
    </lineage>
</organism>